<protein>
    <recommendedName>
        <fullName evidence="1">Chaperonin GroEL</fullName>
        <ecNumber evidence="1">5.6.1.7</ecNumber>
    </recommendedName>
    <alternativeName>
        <fullName evidence="1">60 kDa chaperonin</fullName>
    </alternativeName>
    <alternativeName>
        <fullName evidence="1">Chaperonin-60</fullName>
        <shortName evidence="1">Cpn60</shortName>
    </alternativeName>
</protein>
<dbReference type="EC" id="5.6.1.7" evidence="1"/>
<dbReference type="EMBL" id="M58027">
    <property type="protein sequence ID" value="AAA23128.1"/>
    <property type="molecule type" value="Genomic_DNA"/>
</dbReference>
<dbReference type="EMBL" id="AE001273">
    <property type="protein sequence ID" value="AAC67701.1"/>
    <property type="molecule type" value="Genomic_DNA"/>
</dbReference>
<dbReference type="PIR" id="A71555">
    <property type="entry name" value="A71555"/>
</dbReference>
<dbReference type="PIR" id="B41479">
    <property type="entry name" value="B41479"/>
</dbReference>
<dbReference type="RefSeq" id="WP_010725062.1">
    <property type="nucleotide sequence ID" value="NC_000117.1"/>
</dbReference>
<dbReference type="SMR" id="P0C0Z7"/>
<dbReference type="FunCoup" id="P0C0Z7">
    <property type="interactions" value="264"/>
</dbReference>
<dbReference type="STRING" id="272561.CT_110"/>
<dbReference type="EnsemblBacteria" id="AAC67701">
    <property type="protein sequence ID" value="AAC67701"/>
    <property type="gene ID" value="CT_110"/>
</dbReference>
<dbReference type="KEGG" id="ctr:CT_110"/>
<dbReference type="PATRIC" id="fig|272561.5.peg.120"/>
<dbReference type="HOGENOM" id="CLU_016503_3_0_0"/>
<dbReference type="InParanoid" id="P0C0Z7"/>
<dbReference type="OrthoDB" id="9766614at2"/>
<dbReference type="Proteomes" id="UP000000431">
    <property type="component" value="Chromosome"/>
</dbReference>
<dbReference type="GO" id="GO:1990220">
    <property type="term" value="C:GroEL-GroES complex"/>
    <property type="evidence" value="ECO:0000318"/>
    <property type="project" value="GO_Central"/>
</dbReference>
<dbReference type="GO" id="GO:0005524">
    <property type="term" value="F:ATP binding"/>
    <property type="evidence" value="ECO:0000318"/>
    <property type="project" value="GO_Central"/>
</dbReference>
<dbReference type="GO" id="GO:0140662">
    <property type="term" value="F:ATP-dependent protein folding chaperone"/>
    <property type="evidence" value="ECO:0007669"/>
    <property type="project" value="InterPro"/>
</dbReference>
<dbReference type="GO" id="GO:0016853">
    <property type="term" value="F:isomerase activity"/>
    <property type="evidence" value="ECO:0007669"/>
    <property type="project" value="UniProtKB-KW"/>
</dbReference>
<dbReference type="GO" id="GO:0051082">
    <property type="term" value="F:unfolded protein binding"/>
    <property type="evidence" value="ECO:0000318"/>
    <property type="project" value="GO_Central"/>
</dbReference>
<dbReference type="GO" id="GO:0051085">
    <property type="term" value="P:chaperone cofactor-dependent protein refolding"/>
    <property type="evidence" value="ECO:0000318"/>
    <property type="project" value="GO_Central"/>
</dbReference>
<dbReference type="GO" id="GO:0042026">
    <property type="term" value="P:protein refolding"/>
    <property type="evidence" value="ECO:0007669"/>
    <property type="project" value="UniProtKB-UniRule"/>
</dbReference>
<dbReference type="GO" id="GO:0009408">
    <property type="term" value="P:response to heat"/>
    <property type="evidence" value="ECO:0000318"/>
    <property type="project" value="GO_Central"/>
</dbReference>
<dbReference type="CDD" id="cd03344">
    <property type="entry name" value="GroEL"/>
    <property type="match status" value="1"/>
</dbReference>
<dbReference type="FunFam" id="1.10.560.10:FF:000001">
    <property type="entry name" value="60 kDa chaperonin"/>
    <property type="match status" value="1"/>
</dbReference>
<dbReference type="FunFam" id="3.50.7.10:FF:000001">
    <property type="entry name" value="60 kDa chaperonin"/>
    <property type="match status" value="1"/>
</dbReference>
<dbReference type="Gene3D" id="3.50.7.10">
    <property type="entry name" value="GroEL"/>
    <property type="match status" value="1"/>
</dbReference>
<dbReference type="Gene3D" id="1.10.560.10">
    <property type="entry name" value="GroEL-like equatorial domain"/>
    <property type="match status" value="1"/>
</dbReference>
<dbReference type="Gene3D" id="3.30.260.10">
    <property type="entry name" value="TCP-1-like chaperonin intermediate domain"/>
    <property type="match status" value="1"/>
</dbReference>
<dbReference type="HAMAP" id="MF_00600">
    <property type="entry name" value="CH60"/>
    <property type="match status" value="1"/>
</dbReference>
<dbReference type="InterPro" id="IPR018370">
    <property type="entry name" value="Chaperonin_Cpn60_CS"/>
</dbReference>
<dbReference type="InterPro" id="IPR001844">
    <property type="entry name" value="Cpn60/GroEL"/>
</dbReference>
<dbReference type="InterPro" id="IPR002423">
    <property type="entry name" value="Cpn60/GroEL/TCP-1"/>
</dbReference>
<dbReference type="InterPro" id="IPR027409">
    <property type="entry name" value="GroEL-like_apical_dom_sf"/>
</dbReference>
<dbReference type="InterPro" id="IPR027413">
    <property type="entry name" value="GROEL-like_equatorial_sf"/>
</dbReference>
<dbReference type="InterPro" id="IPR027410">
    <property type="entry name" value="TCP-1-like_intermed_sf"/>
</dbReference>
<dbReference type="NCBIfam" id="TIGR02348">
    <property type="entry name" value="GroEL"/>
    <property type="match status" value="1"/>
</dbReference>
<dbReference type="NCBIfam" id="NF000592">
    <property type="entry name" value="PRK00013.1"/>
    <property type="match status" value="1"/>
</dbReference>
<dbReference type="NCBIfam" id="NF009487">
    <property type="entry name" value="PRK12849.1"/>
    <property type="match status" value="1"/>
</dbReference>
<dbReference type="NCBIfam" id="NF009488">
    <property type="entry name" value="PRK12850.1"/>
    <property type="match status" value="1"/>
</dbReference>
<dbReference type="NCBIfam" id="NF009489">
    <property type="entry name" value="PRK12851.1"/>
    <property type="match status" value="1"/>
</dbReference>
<dbReference type="PANTHER" id="PTHR45633">
    <property type="entry name" value="60 KDA HEAT SHOCK PROTEIN, MITOCHONDRIAL"/>
    <property type="match status" value="1"/>
</dbReference>
<dbReference type="Pfam" id="PF00118">
    <property type="entry name" value="Cpn60_TCP1"/>
    <property type="match status" value="1"/>
</dbReference>
<dbReference type="PRINTS" id="PR00298">
    <property type="entry name" value="CHAPERONIN60"/>
</dbReference>
<dbReference type="SUPFAM" id="SSF52029">
    <property type="entry name" value="GroEL apical domain-like"/>
    <property type="match status" value="1"/>
</dbReference>
<dbReference type="SUPFAM" id="SSF48592">
    <property type="entry name" value="GroEL equatorial domain-like"/>
    <property type="match status" value="1"/>
</dbReference>
<dbReference type="SUPFAM" id="SSF54849">
    <property type="entry name" value="GroEL-intermediate domain like"/>
    <property type="match status" value="1"/>
</dbReference>
<dbReference type="PROSITE" id="PS00296">
    <property type="entry name" value="CHAPERONINS_CPN60"/>
    <property type="match status" value="1"/>
</dbReference>
<evidence type="ECO:0000255" key="1">
    <source>
        <dbReference type="HAMAP-Rule" id="MF_00600"/>
    </source>
</evidence>
<evidence type="ECO:0000269" key="2">
    <source ref="3"/>
</evidence>
<evidence type="ECO:0000305" key="3"/>
<gene>
    <name evidence="1" type="primary">groEL</name>
    <name evidence="1" type="synonym">groL</name>
    <name type="synonym">hypB</name>
    <name type="synonym">mopA</name>
    <name type="ordered locus">CT_110</name>
</gene>
<proteinExistence type="evidence at protein level"/>
<keyword id="KW-0067">ATP-binding</keyword>
<keyword id="KW-0143">Chaperone</keyword>
<keyword id="KW-0963">Cytoplasm</keyword>
<keyword id="KW-0903">Direct protein sequencing</keyword>
<keyword id="KW-0413">Isomerase</keyword>
<keyword id="KW-0547">Nucleotide-binding</keyword>
<keyword id="KW-1185">Reference proteome</keyword>
<keyword id="KW-0346">Stress response</keyword>
<reference key="1">
    <citation type="journal article" date="1991" name="Infect. Immun.">
        <title>Cloning and sequence of the gene for heat shock protein 60 from Chlamydia trachomatis and immunological reactivity of the protein.</title>
        <authorList>
            <person name="Cerrone M.C."/>
            <person name="Ma J.J."/>
            <person name="Stephens R.S."/>
        </authorList>
    </citation>
    <scope>NUCLEOTIDE SEQUENCE [GENOMIC DNA]</scope>
    <source>
        <strain>L2</strain>
    </source>
</reference>
<reference key="2">
    <citation type="journal article" date="1998" name="Science">
        <title>Genome sequence of an obligate intracellular pathogen of humans: Chlamydia trachomatis.</title>
        <authorList>
            <person name="Stephens R.S."/>
            <person name="Kalman S."/>
            <person name="Lammel C.J."/>
            <person name="Fan J."/>
            <person name="Marathe R."/>
            <person name="Aravind L."/>
            <person name="Mitchell W.P."/>
            <person name="Olinger L."/>
            <person name="Tatusov R.L."/>
            <person name="Zhao Q."/>
            <person name="Koonin E.V."/>
            <person name="Davis R.W."/>
        </authorList>
    </citation>
    <scope>NUCLEOTIDE SEQUENCE [LARGE SCALE GENOMIC DNA]</scope>
    <source>
        <strain>ATCC VR-885 / DSM 19411 / UW-3/Cx</strain>
    </source>
</reference>
<reference key="3">
    <citation type="submission" date="1994-09" db="UniProtKB">
        <authorList>
            <person name="Bini L."/>
            <person name="Santucci A."/>
            <person name="Magi B."/>
            <person name="Marzocchi B."/>
            <person name="Sanchez-Campillo M."/>
            <person name="Comanducci M."/>
            <person name="Christianen G."/>
            <person name="Birkelund S."/>
            <person name="Vtretou E."/>
            <person name="Ratti G."/>
            <person name="Pallini V."/>
        </authorList>
    </citation>
    <scope>PROTEIN SEQUENCE OF 2-11</scope>
</reference>
<feature type="initiator methionine" description="Removed" evidence="2">
    <location>
        <position position="1"/>
    </location>
</feature>
<feature type="chain" id="PRO_0000063332" description="Chaperonin GroEL">
    <location>
        <begin position="2"/>
        <end position="544"/>
    </location>
</feature>
<feature type="binding site" evidence="1">
    <location>
        <begin position="30"/>
        <end position="33"/>
    </location>
    <ligand>
        <name>ATP</name>
        <dbReference type="ChEBI" id="CHEBI:30616"/>
    </ligand>
</feature>
<feature type="binding site" evidence="1">
    <location>
        <position position="51"/>
    </location>
    <ligand>
        <name>ATP</name>
        <dbReference type="ChEBI" id="CHEBI:30616"/>
    </ligand>
</feature>
<feature type="binding site" evidence="1">
    <location>
        <begin position="87"/>
        <end position="91"/>
    </location>
    <ligand>
        <name>ATP</name>
        <dbReference type="ChEBI" id="CHEBI:30616"/>
    </ligand>
</feature>
<feature type="binding site" evidence="1">
    <location>
        <position position="415"/>
    </location>
    <ligand>
        <name>ATP</name>
        <dbReference type="ChEBI" id="CHEBI:30616"/>
    </ligand>
</feature>
<feature type="binding site" evidence="1">
    <location>
        <begin position="481"/>
        <end position="483"/>
    </location>
    <ligand>
        <name>ATP</name>
        <dbReference type="ChEBI" id="CHEBI:30616"/>
    </ligand>
</feature>
<feature type="binding site" evidence="1">
    <location>
        <position position="497"/>
    </location>
    <ligand>
        <name>ATP</name>
        <dbReference type="ChEBI" id="CHEBI:30616"/>
    </ligand>
</feature>
<feature type="sequence variant" description="In strain: L2.">
    <original>V</original>
    <variation>A</variation>
    <location>
        <position position="124"/>
    </location>
</feature>
<feature type="sequence variant" description="In strain: L2.">
    <original>I</original>
    <variation>V</variation>
    <location>
        <position position="131"/>
    </location>
</feature>
<feature type="sequence variant" description="In strain: L2.">
    <original>R</original>
    <variation>K</variation>
    <location>
        <position position="132"/>
    </location>
</feature>
<feature type="sequence variant" description="In strain: L2.">
    <original>I</original>
    <variation>V</variation>
    <location>
        <position position="189"/>
    </location>
</feature>
<feature type="sequence variant" description="In strain: L2.">
    <original>E</original>
    <variation>D</variation>
    <location>
        <position position="191"/>
    </location>
</feature>
<feature type="sequence variant" description="In strain: L2.">
    <original>D</original>
    <variation>E</variation>
    <location>
        <position position="217"/>
    </location>
</feature>
<feature type="sequence variant" description="In strain: L2.">
    <original>E</original>
    <variation>V</variation>
    <location>
        <position position="255"/>
    </location>
</feature>
<feature type="sequence variant" description="In strain: L2.">
    <original>V</original>
    <variation>G</variation>
    <location>
        <position position="264"/>
    </location>
</feature>
<feature type="sequence variant" description="In strain: L2.">
    <original>L</original>
    <variation>F</variation>
    <location>
        <position position="289"/>
    </location>
</feature>
<feature type="sequence conflict" description="In Ref. 3; AA sequence." evidence="3" ref="3">
    <original>K</original>
    <variation>D</variation>
    <location>
        <position position="4"/>
    </location>
</feature>
<name>CH60_CHLTR</name>
<sequence length="544" mass="58147">MVAKNIKYNEEARKKIQKGVKTLAEAVKVTLGPKGRHVVIDKSFGSPQVTKDGVTVAKEVELADKHENMGAQMVKEVASKTADKAGDGTTTATVLAEAIYTEGLRNVTAGANPMDLKRGIDKAVKVVVDQIRKISKPVQHHKEIAQVATISANNDAEIGNLIAEAMEKVGKNGSITVEEAKGFETVLDIVEGMNFNRGYLSSYFATNPETQECVLEDALVLIYDKKISGIKDFLPVLQQVAESGRPLLIIAEDIEGEALATLVVNRIRGGFRVCAVKAPGFGDRRKAMLEDIAILTGGQLISEELGMKLENANLAMLGKAKKVIVSKEDTTIVEGMGEKEALEARCESIKKQIEDSSSDYDKEKLQERLAKLSGGVAVIRVGAATEIEMKEKKDRVDDAQHATIAAVEEGILPGGGTALIRCIPTLEAFLPMLTNEDEQIGARIVLKALSAPLKQIAANAGKEGAIIFQQVMSRSANEGYDALRDAYTDMLEAGILDPAKVTRSALESAASVAGLLLTTEALIAEIPEEKPAAAPAMPGAGMDY</sequence>
<accession>P0C0Z7</accession>
<accession>O84112</accession>
<accession>P17203</accession>
<comment type="function">
    <text evidence="1">Together with its co-chaperonin GroES, plays an essential role in assisting protein folding. The GroEL-GroES system forms a nano-cage that allows encapsulation of the non-native substrate proteins and provides a physical environment optimized to promote and accelerate protein folding.</text>
</comment>
<comment type="catalytic activity">
    <reaction evidence="1">
        <text>ATP + H2O + a folded polypeptide = ADP + phosphate + an unfolded polypeptide.</text>
        <dbReference type="EC" id="5.6.1.7"/>
    </reaction>
</comment>
<comment type="subunit">
    <text evidence="1">Forms a cylinder of 14 subunits composed of two heptameric rings stacked back-to-back. Interacts with the co-chaperonin GroES.</text>
</comment>
<comment type="subcellular location">
    <subcellularLocation>
        <location evidence="1">Cytoplasm</location>
    </subcellularLocation>
</comment>
<comment type="induction">
    <text>By stress.</text>
</comment>
<comment type="similarity">
    <text evidence="1">Belongs to the chaperonin (HSP60) family.</text>
</comment>
<organism>
    <name type="scientific">Chlamydia trachomatis serovar D (strain ATCC VR-885 / DSM 19411 / UW-3/Cx)</name>
    <dbReference type="NCBI Taxonomy" id="272561"/>
    <lineage>
        <taxon>Bacteria</taxon>
        <taxon>Pseudomonadati</taxon>
        <taxon>Chlamydiota</taxon>
        <taxon>Chlamydiia</taxon>
        <taxon>Chlamydiales</taxon>
        <taxon>Chlamydiaceae</taxon>
        <taxon>Chlamydia/Chlamydophila group</taxon>
        <taxon>Chlamydia</taxon>
    </lineage>
</organism>